<evidence type="ECO:0000250" key="1"/>
<evidence type="ECO:0000255" key="2">
    <source>
        <dbReference type="PROSITE-ProRule" id="PRU00681"/>
    </source>
</evidence>
<evidence type="ECO:0000305" key="3"/>
<feature type="chain" id="PRO_0000107844" description="Phosphocarrier protein HPr">
    <location>
        <begin position="1"/>
        <end position="85"/>
    </location>
</feature>
<feature type="domain" description="HPr" evidence="2">
    <location>
        <begin position="1"/>
        <end position="85"/>
    </location>
</feature>
<feature type="active site" description="Pros-phosphohistidine intermediate" evidence="2">
    <location>
        <position position="15"/>
    </location>
</feature>
<proteinExistence type="inferred from homology"/>
<gene>
    <name type="primary">ptsH</name>
    <name type="ordered locus">BU065</name>
</gene>
<comment type="function">
    <text evidence="1">General (non sugar-specific) component of the phosphoenolpyruvate-dependent sugar phosphotransferase system (sugar PTS). This major carbohydrate active-transport system catalyzes the phosphorylation of incoming sugar substrates concomitantly with their translocation across the cell membrane. The phosphoryl group from phosphoenolpyruvate (PEP) is transferred to the phosphoryl carrier protein HPr by enzyme I. Phospho-HPr then transfers it to the PTS EIIA domain.</text>
</comment>
<comment type="subcellular location">
    <subcellularLocation>
        <location evidence="1">Cytoplasm</location>
    </subcellularLocation>
</comment>
<comment type="similarity">
    <text evidence="3">Belongs to the HPr family.</text>
</comment>
<accession>Q9WXI5</accession>
<dbReference type="EMBL" id="AB025229">
    <property type="protein sequence ID" value="BAA76878.1"/>
    <property type="molecule type" value="Genomic_DNA"/>
</dbReference>
<dbReference type="EMBL" id="BA000003">
    <property type="protein sequence ID" value="BAB12788.1"/>
    <property type="molecule type" value="Genomic_DNA"/>
</dbReference>
<dbReference type="RefSeq" id="NP_239902.1">
    <property type="nucleotide sequence ID" value="NC_002528.1"/>
</dbReference>
<dbReference type="RefSeq" id="WP_009874022.1">
    <property type="nucleotide sequence ID" value="NZ_AP036055.1"/>
</dbReference>
<dbReference type="SMR" id="Q9WXI5"/>
<dbReference type="STRING" id="563178.BUAP5A_064"/>
<dbReference type="EnsemblBacteria" id="BAB12788">
    <property type="protein sequence ID" value="BAB12788"/>
    <property type="gene ID" value="BAB12788"/>
</dbReference>
<dbReference type="KEGG" id="buc:BU065"/>
<dbReference type="PATRIC" id="fig|107806.10.peg.74"/>
<dbReference type="eggNOG" id="COG1925">
    <property type="taxonomic scope" value="Bacteria"/>
</dbReference>
<dbReference type="HOGENOM" id="CLU_136230_2_3_6"/>
<dbReference type="Proteomes" id="UP000001806">
    <property type="component" value="Chromosome"/>
</dbReference>
<dbReference type="GO" id="GO:0005737">
    <property type="term" value="C:cytoplasm"/>
    <property type="evidence" value="ECO:0007669"/>
    <property type="project" value="UniProtKB-SubCell"/>
</dbReference>
<dbReference type="GO" id="GO:0009401">
    <property type="term" value="P:phosphoenolpyruvate-dependent sugar phosphotransferase system"/>
    <property type="evidence" value="ECO:0007669"/>
    <property type="project" value="UniProtKB-KW"/>
</dbReference>
<dbReference type="CDD" id="cd00367">
    <property type="entry name" value="PTS-HPr_like"/>
    <property type="match status" value="1"/>
</dbReference>
<dbReference type="Gene3D" id="3.30.1340.10">
    <property type="entry name" value="HPr-like"/>
    <property type="match status" value="1"/>
</dbReference>
<dbReference type="InterPro" id="IPR050399">
    <property type="entry name" value="HPr"/>
</dbReference>
<dbReference type="InterPro" id="IPR000032">
    <property type="entry name" value="HPr-like"/>
</dbReference>
<dbReference type="InterPro" id="IPR035895">
    <property type="entry name" value="HPr-like_sf"/>
</dbReference>
<dbReference type="InterPro" id="IPR001020">
    <property type="entry name" value="PTS_HPr_His_P_site"/>
</dbReference>
<dbReference type="InterPro" id="IPR002114">
    <property type="entry name" value="PTS_HPr_Ser_P_site"/>
</dbReference>
<dbReference type="NCBIfam" id="TIGR01003">
    <property type="entry name" value="PTS_HPr_family"/>
    <property type="match status" value="1"/>
</dbReference>
<dbReference type="PANTHER" id="PTHR33705">
    <property type="entry name" value="PHOSPHOCARRIER PROTEIN HPR"/>
    <property type="match status" value="1"/>
</dbReference>
<dbReference type="PANTHER" id="PTHR33705:SF1">
    <property type="entry name" value="PHOSPHOCARRIER PROTEIN HPR"/>
    <property type="match status" value="1"/>
</dbReference>
<dbReference type="Pfam" id="PF00381">
    <property type="entry name" value="PTS-HPr"/>
    <property type="match status" value="1"/>
</dbReference>
<dbReference type="PRINTS" id="PR00107">
    <property type="entry name" value="PHOSPHOCPHPR"/>
</dbReference>
<dbReference type="SUPFAM" id="SSF55594">
    <property type="entry name" value="HPr-like"/>
    <property type="match status" value="1"/>
</dbReference>
<dbReference type="PROSITE" id="PS51350">
    <property type="entry name" value="PTS_HPR_DOM"/>
    <property type="match status" value="1"/>
</dbReference>
<dbReference type="PROSITE" id="PS00369">
    <property type="entry name" value="PTS_HPR_HIS"/>
    <property type="match status" value="1"/>
</dbReference>
<dbReference type="PROSITE" id="PS00589">
    <property type="entry name" value="PTS_HPR_SER"/>
    <property type="match status" value="1"/>
</dbReference>
<sequence>MFQNQVKITAPHGLHTRPAAQFVKEAKKFTSEISIIYNGKSVNAKSLFKIQTLGLIQGSLITLSAEGEDEKKAIEHLSLIMTELE</sequence>
<organism>
    <name type="scientific">Buchnera aphidicola subsp. Acyrthosiphon pisum (strain APS)</name>
    <name type="common">Acyrthosiphon pisum symbiotic bacterium</name>
    <dbReference type="NCBI Taxonomy" id="107806"/>
    <lineage>
        <taxon>Bacteria</taxon>
        <taxon>Pseudomonadati</taxon>
        <taxon>Pseudomonadota</taxon>
        <taxon>Gammaproteobacteria</taxon>
        <taxon>Enterobacterales</taxon>
        <taxon>Erwiniaceae</taxon>
        <taxon>Buchnera</taxon>
    </lineage>
</organism>
<keyword id="KW-0963">Cytoplasm</keyword>
<keyword id="KW-0598">Phosphotransferase system</keyword>
<keyword id="KW-1185">Reference proteome</keyword>
<keyword id="KW-0762">Sugar transport</keyword>
<keyword id="KW-0813">Transport</keyword>
<protein>
    <recommendedName>
        <fullName>Phosphocarrier protein HPr</fullName>
    </recommendedName>
    <alternativeName>
        <fullName>Histidine-containing protein</fullName>
    </alternativeName>
</protein>
<name>PTHP_BUCAI</name>
<reference key="1">
    <citation type="submission" date="1999-03" db="EMBL/GenBank/DDBJ databases">
        <title>Buchnera sp. DNA for ptsH-ptsI-crr operon.</title>
        <authorList>
            <person name="Matsumoto K."/>
            <person name="Morioka M."/>
            <person name="Ishikawa H."/>
        </authorList>
    </citation>
    <scope>NUCLEOTIDE SEQUENCE [GENOMIC DNA]</scope>
</reference>
<reference key="2">
    <citation type="journal article" date="2000" name="Nature">
        <title>Genome sequence of the endocellular bacterial symbiont of aphids Buchnera sp. APS.</title>
        <authorList>
            <person name="Shigenobu S."/>
            <person name="Watanabe H."/>
            <person name="Hattori M."/>
            <person name="Sakaki Y."/>
            <person name="Ishikawa H."/>
        </authorList>
    </citation>
    <scope>NUCLEOTIDE SEQUENCE [LARGE SCALE GENOMIC DNA]</scope>
    <source>
        <strain>APS</strain>
    </source>
</reference>